<protein>
    <recommendedName>
        <fullName>Caffeic acid 3-O-methyltransferase</fullName>
        <shortName>CAOMT</shortName>
        <shortName>COMT</shortName>
        <ecNumber>2.1.1.68</ecNumber>
    </recommendedName>
    <alternativeName>
        <fullName>S-adenosysl-L-methionine:caffeic acid 3-O-methyltransferase</fullName>
    </alternativeName>
</protein>
<evidence type="ECO:0000250" key="1"/>
<evidence type="ECO:0000255" key="2">
    <source>
        <dbReference type="PROSITE-ProRule" id="PRU01020"/>
    </source>
</evidence>
<keyword id="KW-0438">Lignin biosynthesis</keyword>
<keyword id="KW-0489">Methyltransferase</keyword>
<keyword id="KW-0949">S-adenosyl-L-methionine</keyword>
<keyword id="KW-0808">Transferase</keyword>
<reference key="1">
    <citation type="journal article" date="1995" name="Plant Physiol.">
        <title>Differential expression of two O-methyltransferases in lignin biosynthesis in Zinnia elegans.</title>
        <authorList>
            <person name="Ye Z.-H."/>
            <person name="Varner J.E."/>
        </authorList>
    </citation>
    <scope>NUCLEOTIDE SEQUENCE [MRNA]</scope>
    <source>
        <strain>cv. Peter Pan</strain>
    </source>
</reference>
<organism>
    <name type="scientific">Zinnia elegans</name>
    <name type="common">Garden zinnia</name>
    <name type="synonym">Zinnia violacea</name>
    <dbReference type="NCBI Taxonomy" id="34245"/>
    <lineage>
        <taxon>Eukaryota</taxon>
        <taxon>Viridiplantae</taxon>
        <taxon>Streptophyta</taxon>
        <taxon>Embryophyta</taxon>
        <taxon>Tracheophyta</taxon>
        <taxon>Spermatophyta</taxon>
        <taxon>Magnoliopsida</taxon>
        <taxon>eudicotyledons</taxon>
        <taxon>Gunneridae</taxon>
        <taxon>Pentapetalae</taxon>
        <taxon>asterids</taxon>
        <taxon>campanulids</taxon>
        <taxon>Asterales</taxon>
        <taxon>Asteraceae</taxon>
        <taxon>Asteroideae</taxon>
        <taxon>Heliantheae alliance</taxon>
        <taxon>Heliantheae</taxon>
        <taxon>Zinnia</taxon>
    </lineage>
</organism>
<sequence>MGSNQDDQAFLFAMQLASASVLPMVLKTAIELDLLETIAKAGPHGSVSSSELVAQLPKVNNPEAPVMIDRICSLLASYSVLTCTLKETADGCAERFYGLAPVCKFLIKNDAGVSLAPLLLMNQDKVLMESWYYLKDPVLDGGIPFNKAYGMSAFEYHGKDQRFNKVFNSGMFNHSTMTMKKIVELYNGFSGLKTLVDVGGGTGASLNMITSKHKSLKGINFDLPHVIADATTYQGIEHVGGDMFESVPKGDAIFMKWILHDWSDAHCLQVLKNCYKSLPENGKVIVAECILPEAPDTTPATQNVIHIDVIMLAHNPGGKERTEKEFEALAKGAGFKGFNKAACALNTWVMEFCK</sequence>
<accession>Q43239</accession>
<proteinExistence type="evidence at transcript level"/>
<feature type="chain" id="PRO_0000063214" description="Caffeic acid 3-O-methyltransferase">
    <location>
        <begin position="1"/>
        <end position="354"/>
    </location>
</feature>
<feature type="region of interest" description="Substrate binding" evidence="1">
    <location>
        <begin position="153"/>
        <end position="171"/>
    </location>
</feature>
<feature type="active site" description="Proton acceptor" evidence="2">
    <location>
        <position position="260"/>
    </location>
</feature>
<feature type="binding site" evidence="1">
    <location>
        <begin position="121"/>
        <end position="127"/>
    </location>
    <ligand>
        <name>substrate</name>
    </ligand>
</feature>
<feature type="binding site" evidence="2">
    <location>
        <position position="199"/>
    </location>
    <ligand>
        <name>S-adenosyl-L-methionine</name>
        <dbReference type="ChEBI" id="CHEBI:59789"/>
    </ligand>
</feature>
<feature type="binding site" evidence="2">
    <location>
        <position position="222"/>
    </location>
    <ligand>
        <name>S-adenosyl-L-methionine</name>
        <dbReference type="ChEBI" id="CHEBI:59789"/>
    </ligand>
</feature>
<feature type="binding site" evidence="2">
    <location>
        <position position="242"/>
    </location>
    <ligand>
        <name>S-adenosyl-L-methionine</name>
        <dbReference type="ChEBI" id="CHEBI:59789"/>
    </ligand>
</feature>
<feature type="binding site" evidence="2">
    <location>
        <position position="243"/>
    </location>
    <ligand>
        <name>S-adenosyl-L-methionine</name>
        <dbReference type="ChEBI" id="CHEBI:59789"/>
    </ligand>
</feature>
<feature type="binding site" evidence="2">
    <location>
        <position position="256"/>
    </location>
    <ligand>
        <name>S-adenosyl-L-methionine</name>
        <dbReference type="ChEBI" id="CHEBI:59789"/>
    </ligand>
</feature>
<dbReference type="EC" id="2.1.1.68"/>
<dbReference type="EMBL" id="U19911">
    <property type="protein sequence ID" value="AAA86718.1"/>
    <property type="molecule type" value="mRNA"/>
</dbReference>
<dbReference type="SMR" id="Q43239"/>
<dbReference type="UniPathway" id="UPA00711"/>
<dbReference type="GO" id="GO:0047763">
    <property type="term" value="F:caffeate O-methyltransferase activity"/>
    <property type="evidence" value="ECO:0007669"/>
    <property type="project" value="UniProtKB-EC"/>
</dbReference>
<dbReference type="GO" id="GO:0046983">
    <property type="term" value="F:protein dimerization activity"/>
    <property type="evidence" value="ECO:0007669"/>
    <property type="project" value="InterPro"/>
</dbReference>
<dbReference type="GO" id="GO:0009809">
    <property type="term" value="P:lignin biosynthetic process"/>
    <property type="evidence" value="ECO:0007669"/>
    <property type="project" value="UniProtKB-KW"/>
</dbReference>
<dbReference type="GO" id="GO:0032259">
    <property type="term" value="P:methylation"/>
    <property type="evidence" value="ECO:0007669"/>
    <property type="project" value="UniProtKB-KW"/>
</dbReference>
<dbReference type="CDD" id="cd02440">
    <property type="entry name" value="AdoMet_MTases"/>
    <property type="match status" value="1"/>
</dbReference>
<dbReference type="FunFam" id="1.10.10.10:FF:000357">
    <property type="entry name" value="Caffeic acid 3-O-methyltransferase"/>
    <property type="match status" value="1"/>
</dbReference>
<dbReference type="FunFam" id="3.40.50.150:FF:000061">
    <property type="entry name" value="Caffeic acid O-methyltransferase"/>
    <property type="match status" value="1"/>
</dbReference>
<dbReference type="Gene3D" id="3.40.50.150">
    <property type="entry name" value="Vaccinia Virus protein VP39"/>
    <property type="match status" value="1"/>
</dbReference>
<dbReference type="Gene3D" id="1.10.10.10">
    <property type="entry name" value="Winged helix-like DNA-binding domain superfamily/Winged helix DNA-binding domain"/>
    <property type="match status" value="1"/>
</dbReference>
<dbReference type="InterPro" id="IPR016461">
    <property type="entry name" value="COMT-like"/>
</dbReference>
<dbReference type="InterPro" id="IPR001077">
    <property type="entry name" value="O_MeTrfase_dom"/>
</dbReference>
<dbReference type="InterPro" id="IPR012967">
    <property type="entry name" value="Plant_O-MeTrfase_dimerisation"/>
</dbReference>
<dbReference type="InterPro" id="IPR029063">
    <property type="entry name" value="SAM-dependent_MTases_sf"/>
</dbReference>
<dbReference type="InterPro" id="IPR036388">
    <property type="entry name" value="WH-like_DNA-bd_sf"/>
</dbReference>
<dbReference type="InterPro" id="IPR036390">
    <property type="entry name" value="WH_DNA-bd_sf"/>
</dbReference>
<dbReference type="PANTHER" id="PTHR11746">
    <property type="entry name" value="O-METHYLTRANSFERASE"/>
    <property type="match status" value="1"/>
</dbReference>
<dbReference type="Pfam" id="PF08100">
    <property type="entry name" value="Dimerisation"/>
    <property type="match status" value="1"/>
</dbReference>
<dbReference type="Pfam" id="PF00891">
    <property type="entry name" value="Methyltransf_2"/>
    <property type="match status" value="1"/>
</dbReference>
<dbReference type="PIRSF" id="PIRSF005739">
    <property type="entry name" value="O-mtase"/>
    <property type="match status" value="1"/>
</dbReference>
<dbReference type="SUPFAM" id="SSF53335">
    <property type="entry name" value="S-adenosyl-L-methionine-dependent methyltransferases"/>
    <property type="match status" value="1"/>
</dbReference>
<dbReference type="SUPFAM" id="SSF46785">
    <property type="entry name" value="Winged helix' DNA-binding domain"/>
    <property type="match status" value="1"/>
</dbReference>
<dbReference type="PROSITE" id="PS51683">
    <property type="entry name" value="SAM_OMT_II"/>
    <property type="match status" value="1"/>
</dbReference>
<comment type="function">
    <text>Catalyzes the conversion of caffeic acid to ferulic acid and of 5-hydroxyferulic acid to sinapic acid. The resulting products may subsequently be converted to the corresponding alcohols that are incorporated into lignins.</text>
</comment>
<comment type="catalytic activity">
    <reaction>
        <text>(E)-caffeate + S-adenosyl-L-methionine = (E)-ferulate + S-adenosyl-L-homocysteine + H(+)</text>
        <dbReference type="Rhea" id="RHEA:20225"/>
        <dbReference type="ChEBI" id="CHEBI:15378"/>
        <dbReference type="ChEBI" id="CHEBI:29749"/>
        <dbReference type="ChEBI" id="CHEBI:57770"/>
        <dbReference type="ChEBI" id="CHEBI:57856"/>
        <dbReference type="ChEBI" id="CHEBI:59789"/>
        <dbReference type="EC" id="2.1.1.68"/>
    </reaction>
</comment>
<comment type="pathway">
    <text>Aromatic compound metabolism; phenylpropanoid biosynthesis.</text>
</comment>
<comment type="subunit">
    <text evidence="1">Homodimer.</text>
</comment>
<comment type="similarity">
    <text evidence="2">Belongs to the class I-like SAM-binding methyltransferase superfamily. Cation-independent O-methyltransferase family. COMT subfamily.</text>
</comment>
<name>COMT1_ZINEL</name>